<reference key="1">
    <citation type="journal article" date="2005" name="Proc. Natl. Acad. Sci. U.S.A.">
        <title>Genome analysis of multiple pathogenic isolates of Streptococcus agalactiae: implications for the microbial 'pan-genome'.</title>
        <authorList>
            <person name="Tettelin H."/>
            <person name="Masignani V."/>
            <person name="Cieslewicz M.J."/>
            <person name="Donati C."/>
            <person name="Medini D."/>
            <person name="Ward N.L."/>
            <person name="Angiuoli S.V."/>
            <person name="Crabtree J."/>
            <person name="Jones A.L."/>
            <person name="Durkin A.S."/>
            <person name="DeBoy R.T."/>
            <person name="Davidsen T.M."/>
            <person name="Mora M."/>
            <person name="Scarselli M."/>
            <person name="Margarit y Ros I."/>
            <person name="Peterson J.D."/>
            <person name="Hauser C.R."/>
            <person name="Sundaram J.P."/>
            <person name="Nelson W.C."/>
            <person name="Madupu R."/>
            <person name="Brinkac L.M."/>
            <person name="Dodson R.J."/>
            <person name="Rosovitz M.J."/>
            <person name="Sullivan S.A."/>
            <person name="Daugherty S.C."/>
            <person name="Haft D.H."/>
            <person name="Selengut J."/>
            <person name="Gwinn M.L."/>
            <person name="Zhou L."/>
            <person name="Zafar N."/>
            <person name="Khouri H."/>
            <person name="Radune D."/>
            <person name="Dimitrov G."/>
            <person name="Watkins K."/>
            <person name="O'Connor K.J."/>
            <person name="Smith S."/>
            <person name="Utterback T.R."/>
            <person name="White O."/>
            <person name="Rubens C.E."/>
            <person name="Grandi G."/>
            <person name="Madoff L.C."/>
            <person name="Kasper D.L."/>
            <person name="Telford J.L."/>
            <person name="Wessels M.R."/>
            <person name="Rappuoli R."/>
            <person name="Fraser C.M."/>
        </authorList>
    </citation>
    <scope>NUCLEOTIDE SEQUENCE [LARGE SCALE GENOMIC DNA]</scope>
    <source>
        <strain>ATCC 27591 / A909 / CDC SS700</strain>
    </source>
</reference>
<proteinExistence type="inferred from homology"/>
<name>SSTT_STRA1</name>
<organism>
    <name type="scientific">Streptococcus agalactiae serotype Ia (strain ATCC 27591 / A909 / CDC SS700)</name>
    <dbReference type="NCBI Taxonomy" id="205921"/>
    <lineage>
        <taxon>Bacteria</taxon>
        <taxon>Bacillati</taxon>
        <taxon>Bacillota</taxon>
        <taxon>Bacilli</taxon>
        <taxon>Lactobacillales</taxon>
        <taxon>Streptococcaceae</taxon>
        <taxon>Streptococcus</taxon>
    </lineage>
</organism>
<gene>
    <name evidence="1" type="primary">sstT</name>
    <name type="ordered locus">SAK_1649</name>
</gene>
<evidence type="ECO:0000255" key="1">
    <source>
        <dbReference type="HAMAP-Rule" id="MF_01582"/>
    </source>
</evidence>
<accession>Q3JZQ1</accession>
<feature type="chain" id="PRO_0000309134" description="Serine/threonine transporter SstT">
    <location>
        <begin position="1"/>
        <end position="402"/>
    </location>
</feature>
<feature type="transmembrane region" description="Helical" evidence="1">
    <location>
        <begin position="19"/>
        <end position="39"/>
    </location>
</feature>
<feature type="transmembrane region" description="Helical" evidence="1">
    <location>
        <begin position="43"/>
        <end position="63"/>
    </location>
</feature>
<feature type="transmembrane region" description="Helical" evidence="1">
    <location>
        <begin position="86"/>
        <end position="106"/>
    </location>
</feature>
<feature type="transmembrane region" description="Helical" evidence="1">
    <location>
        <begin position="138"/>
        <end position="158"/>
    </location>
</feature>
<feature type="transmembrane region" description="Helical" evidence="1">
    <location>
        <begin position="179"/>
        <end position="199"/>
    </location>
</feature>
<feature type="transmembrane region" description="Helical" evidence="1">
    <location>
        <begin position="212"/>
        <end position="232"/>
    </location>
</feature>
<feature type="transmembrane region" description="Helical" evidence="1">
    <location>
        <begin position="287"/>
        <end position="307"/>
    </location>
</feature>
<feature type="transmembrane region" description="Helical" evidence="1">
    <location>
        <begin position="327"/>
        <end position="347"/>
    </location>
</feature>
<feature type="transmembrane region" description="Helical" evidence="1">
    <location>
        <begin position="354"/>
        <end position="374"/>
    </location>
</feature>
<protein>
    <recommendedName>
        <fullName evidence="1">Serine/threonine transporter SstT</fullName>
    </recommendedName>
    <alternativeName>
        <fullName evidence="1">Na(+)/serine-threonine symporter</fullName>
    </alternativeName>
</protein>
<sequence length="402" mass="42469">MKRFLKAWRKTSLIKKITIGVVIGLFLGILVPKASAIGLLGQLFVGGLKAIAPLLVFTLVISALSQHREGGKTNMSTIIGLYITATFAAALIAVVVNYIFPLTLILKTPAKTDLLPPKGISEVFQSLLLKIVDNPIHAITEANYMSILFWAVIFGLAMRSSNQRTKDLMQTFADATSQVVKWIINLAPIGIMGLVFTSISENGIGILGDYGLLILVLVGTMLFVALVVNPIIAFVMMRKNPYPLVLRCLKDSGITAFFTRSSAANIPVNMRLCEDLGLDKDTYSVSIPLGAAINMAGAAITINILTLAAVNTLGITVDFPTAFLLSVVAAVSACGASGVTGGSLLLIPVACSLFGISNDVAMQVVGVGFIVGVIQDSCETALNSSTDVLFTAVAEKSVFGKK</sequence>
<comment type="function">
    <text evidence="1">Involved in the import of serine and threonine into the cell, with the concomitant import of sodium (symport system).</text>
</comment>
<comment type="catalytic activity">
    <reaction evidence="1">
        <text>L-serine(in) + Na(+)(in) = L-serine(out) + Na(+)(out)</text>
        <dbReference type="Rhea" id="RHEA:29575"/>
        <dbReference type="ChEBI" id="CHEBI:29101"/>
        <dbReference type="ChEBI" id="CHEBI:33384"/>
    </reaction>
    <physiologicalReaction direction="right-to-left" evidence="1">
        <dbReference type="Rhea" id="RHEA:29577"/>
    </physiologicalReaction>
</comment>
<comment type="catalytic activity">
    <reaction evidence="1">
        <text>L-threonine(in) + Na(+)(in) = L-threonine(out) + Na(+)(out)</text>
        <dbReference type="Rhea" id="RHEA:69999"/>
        <dbReference type="ChEBI" id="CHEBI:29101"/>
        <dbReference type="ChEBI" id="CHEBI:57926"/>
    </reaction>
    <physiologicalReaction direction="right-to-left" evidence="1">
        <dbReference type="Rhea" id="RHEA:70001"/>
    </physiologicalReaction>
</comment>
<comment type="subcellular location">
    <subcellularLocation>
        <location evidence="1">Cell membrane</location>
        <topology evidence="1">Multi-pass membrane protein</topology>
    </subcellularLocation>
</comment>
<comment type="similarity">
    <text evidence="1">Belongs to the dicarboxylate/amino acid:cation symporter (DAACS) (TC 2.A.23) family.</text>
</comment>
<dbReference type="EMBL" id="CP000114">
    <property type="protein sequence ID" value="ABA44678.1"/>
    <property type="molecule type" value="Genomic_DNA"/>
</dbReference>
<dbReference type="RefSeq" id="WP_000819596.1">
    <property type="nucleotide sequence ID" value="NC_007432.1"/>
</dbReference>
<dbReference type="SMR" id="Q3JZQ1"/>
<dbReference type="GeneID" id="66886479"/>
<dbReference type="KEGG" id="sak:SAK_1649"/>
<dbReference type="HOGENOM" id="CLU_044581_0_0_9"/>
<dbReference type="GO" id="GO:0005886">
    <property type="term" value="C:plasma membrane"/>
    <property type="evidence" value="ECO:0007669"/>
    <property type="project" value="UniProtKB-SubCell"/>
</dbReference>
<dbReference type="GO" id="GO:0005295">
    <property type="term" value="F:neutral L-amino acid:sodium symporter activity"/>
    <property type="evidence" value="ECO:0007669"/>
    <property type="project" value="TreeGrafter"/>
</dbReference>
<dbReference type="GO" id="GO:0032329">
    <property type="term" value="P:serine transport"/>
    <property type="evidence" value="ECO:0007669"/>
    <property type="project" value="InterPro"/>
</dbReference>
<dbReference type="GO" id="GO:0015826">
    <property type="term" value="P:threonine transport"/>
    <property type="evidence" value="ECO:0007669"/>
    <property type="project" value="InterPro"/>
</dbReference>
<dbReference type="FunFam" id="1.10.3860.10:FF:000003">
    <property type="entry name" value="Serine/threonine transporter sstT"/>
    <property type="match status" value="1"/>
</dbReference>
<dbReference type="Gene3D" id="1.10.3860.10">
    <property type="entry name" value="Sodium:dicarboxylate symporter"/>
    <property type="match status" value="1"/>
</dbReference>
<dbReference type="HAMAP" id="MF_01582">
    <property type="entry name" value="Ser_Thr_transp_SstT"/>
    <property type="match status" value="1"/>
</dbReference>
<dbReference type="InterPro" id="IPR001991">
    <property type="entry name" value="Na-dicarboxylate_symporter"/>
</dbReference>
<dbReference type="InterPro" id="IPR036458">
    <property type="entry name" value="Na:dicarbo_symporter_sf"/>
</dbReference>
<dbReference type="InterPro" id="IPR023025">
    <property type="entry name" value="Ser_Thr_transp_SstT"/>
</dbReference>
<dbReference type="NCBIfam" id="NF010151">
    <property type="entry name" value="PRK13628.1"/>
    <property type="match status" value="1"/>
</dbReference>
<dbReference type="PANTHER" id="PTHR42865">
    <property type="entry name" value="PROTON/GLUTAMATE-ASPARTATE SYMPORTER"/>
    <property type="match status" value="1"/>
</dbReference>
<dbReference type="PANTHER" id="PTHR42865:SF8">
    <property type="entry name" value="SERINE_THREONINE TRANSPORTER SSTT"/>
    <property type="match status" value="1"/>
</dbReference>
<dbReference type="Pfam" id="PF00375">
    <property type="entry name" value="SDF"/>
    <property type="match status" value="1"/>
</dbReference>
<dbReference type="PRINTS" id="PR00173">
    <property type="entry name" value="EDTRNSPORT"/>
</dbReference>
<dbReference type="SUPFAM" id="SSF118215">
    <property type="entry name" value="Proton glutamate symport protein"/>
    <property type="match status" value="1"/>
</dbReference>
<keyword id="KW-0029">Amino-acid transport</keyword>
<keyword id="KW-1003">Cell membrane</keyword>
<keyword id="KW-0472">Membrane</keyword>
<keyword id="KW-0769">Symport</keyword>
<keyword id="KW-0812">Transmembrane</keyword>
<keyword id="KW-1133">Transmembrane helix</keyword>
<keyword id="KW-0813">Transport</keyword>